<evidence type="ECO:0000255" key="1">
    <source>
        <dbReference type="HAMAP-Rule" id="MF_00113"/>
    </source>
</evidence>
<protein>
    <recommendedName>
        <fullName evidence="1">S-adenosylmethionine:tRNA ribosyltransferase-isomerase</fullName>
        <ecNumber evidence="1">2.4.99.17</ecNumber>
    </recommendedName>
    <alternativeName>
        <fullName evidence="1">Queuosine biosynthesis protein QueA</fullName>
    </alternativeName>
</protein>
<accession>Q03ER1</accession>
<proteinExistence type="inferred from homology"/>
<reference key="1">
    <citation type="journal article" date="2006" name="Proc. Natl. Acad. Sci. U.S.A.">
        <title>Comparative genomics of the lactic acid bacteria.</title>
        <authorList>
            <person name="Makarova K.S."/>
            <person name="Slesarev A."/>
            <person name="Wolf Y.I."/>
            <person name="Sorokin A."/>
            <person name="Mirkin B."/>
            <person name="Koonin E.V."/>
            <person name="Pavlov A."/>
            <person name="Pavlova N."/>
            <person name="Karamychev V."/>
            <person name="Polouchine N."/>
            <person name="Shakhova V."/>
            <person name="Grigoriev I."/>
            <person name="Lou Y."/>
            <person name="Rohksar D."/>
            <person name="Lucas S."/>
            <person name="Huang K."/>
            <person name="Goodstein D.M."/>
            <person name="Hawkins T."/>
            <person name="Plengvidhya V."/>
            <person name="Welker D."/>
            <person name="Hughes J."/>
            <person name="Goh Y."/>
            <person name="Benson A."/>
            <person name="Baldwin K."/>
            <person name="Lee J.-H."/>
            <person name="Diaz-Muniz I."/>
            <person name="Dosti B."/>
            <person name="Smeianov V."/>
            <person name="Wechter W."/>
            <person name="Barabote R."/>
            <person name="Lorca G."/>
            <person name="Altermann E."/>
            <person name="Barrangou R."/>
            <person name="Ganesan B."/>
            <person name="Xie Y."/>
            <person name="Rawsthorne H."/>
            <person name="Tamir D."/>
            <person name="Parker C."/>
            <person name="Breidt F."/>
            <person name="Broadbent J.R."/>
            <person name="Hutkins R."/>
            <person name="O'Sullivan D."/>
            <person name="Steele J."/>
            <person name="Unlu G."/>
            <person name="Saier M.H. Jr."/>
            <person name="Klaenhammer T."/>
            <person name="Richardson P."/>
            <person name="Kozyavkin S."/>
            <person name="Weimer B.C."/>
            <person name="Mills D.A."/>
        </authorList>
    </citation>
    <scope>NUCLEOTIDE SEQUENCE [LARGE SCALE GENOMIC DNA]</scope>
    <source>
        <strain>ATCC 25745 / CCUG 21536 / LMG 10740 / 183-1w</strain>
    </source>
</reference>
<feature type="chain" id="PRO_1000015242" description="S-adenosylmethionine:tRNA ribosyltransferase-isomerase">
    <location>
        <begin position="1"/>
        <end position="344"/>
    </location>
</feature>
<name>QUEA_PEDPA</name>
<sequence>MTLTTEDFNYDLPHELIAQTPIKERDESRLLVLDHETGAMEDKHFYDIIDQLNPGDAVVMNNSRVMPARIYGIKDKTGGHFEVLLLHNIEGDRWETLVKPAKRAKTGTKIIFGDGALTATVTKELEHGGREIVFDYDGIFMEVLEKLGEMPLPPYIKEKLDDPERYQTVYSKEPGSAAAPTAGLHWTKELLEKVEQKGIKLVYLTLHVGLGTFRPVDEDNIEDHKMHSEFYQLSEESAAALNEVKKQGGRIVATGTTSIRTLETIGSKFNGEIKADSGWTDIFIKPGYEWKVVDAFITNFHLPKSTLVMLVAAFTGRENILNAYQHAIEEKYRFFSFGDAMFIK</sequence>
<comment type="function">
    <text evidence="1">Transfers and isomerizes the ribose moiety from AdoMet to the 7-aminomethyl group of 7-deazaguanine (preQ1-tRNA) to give epoxyqueuosine (oQ-tRNA).</text>
</comment>
<comment type="catalytic activity">
    <reaction evidence="1">
        <text>7-aminomethyl-7-carbaguanosine(34) in tRNA + S-adenosyl-L-methionine = epoxyqueuosine(34) in tRNA + adenine + L-methionine + 2 H(+)</text>
        <dbReference type="Rhea" id="RHEA:32155"/>
        <dbReference type="Rhea" id="RHEA-COMP:10342"/>
        <dbReference type="Rhea" id="RHEA-COMP:18582"/>
        <dbReference type="ChEBI" id="CHEBI:15378"/>
        <dbReference type="ChEBI" id="CHEBI:16708"/>
        <dbReference type="ChEBI" id="CHEBI:57844"/>
        <dbReference type="ChEBI" id="CHEBI:59789"/>
        <dbReference type="ChEBI" id="CHEBI:82833"/>
        <dbReference type="ChEBI" id="CHEBI:194443"/>
        <dbReference type="EC" id="2.4.99.17"/>
    </reaction>
</comment>
<comment type="pathway">
    <text evidence="1">tRNA modification; tRNA-queuosine biosynthesis.</text>
</comment>
<comment type="subunit">
    <text evidence="1">Monomer.</text>
</comment>
<comment type="subcellular location">
    <subcellularLocation>
        <location evidence="1">Cytoplasm</location>
    </subcellularLocation>
</comment>
<comment type="similarity">
    <text evidence="1">Belongs to the QueA family.</text>
</comment>
<organism>
    <name type="scientific">Pediococcus pentosaceus (strain ATCC 25745 / CCUG 21536 / LMG 10740 / 183-1w)</name>
    <dbReference type="NCBI Taxonomy" id="278197"/>
    <lineage>
        <taxon>Bacteria</taxon>
        <taxon>Bacillati</taxon>
        <taxon>Bacillota</taxon>
        <taxon>Bacilli</taxon>
        <taxon>Lactobacillales</taxon>
        <taxon>Lactobacillaceae</taxon>
        <taxon>Pediococcus</taxon>
    </lineage>
</organism>
<gene>
    <name evidence="1" type="primary">queA</name>
    <name type="ordered locus">PEPE_1270</name>
</gene>
<dbReference type="EC" id="2.4.99.17" evidence="1"/>
<dbReference type="EMBL" id="CP000422">
    <property type="protein sequence ID" value="ABJ68311.1"/>
    <property type="molecule type" value="Genomic_DNA"/>
</dbReference>
<dbReference type="RefSeq" id="WP_002833734.1">
    <property type="nucleotide sequence ID" value="NC_008525.1"/>
</dbReference>
<dbReference type="SMR" id="Q03ER1"/>
<dbReference type="STRING" id="278197.PEPE_1270"/>
<dbReference type="GeneID" id="33061715"/>
<dbReference type="KEGG" id="ppe:PEPE_1270"/>
<dbReference type="eggNOG" id="COG0809">
    <property type="taxonomic scope" value="Bacteria"/>
</dbReference>
<dbReference type="HOGENOM" id="CLU_039110_1_0_9"/>
<dbReference type="OrthoDB" id="9805933at2"/>
<dbReference type="UniPathway" id="UPA00392"/>
<dbReference type="Proteomes" id="UP000000773">
    <property type="component" value="Chromosome"/>
</dbReference>
<dbReference type="GO" id="GO:0005737">
    <property type="term" value="C:cytoplasm"/>
    <property type="evidence" value="ECO:0007669"/>
    <property type="project" value="UniProtKB-SubCell"/>
</dbReference>
<dbReference type="GO" id="GO:0051075">
    <property type="term" value="F:S-adenosylmethionine:tRNA ribosyltransferase-isomerase activity"/>
    <property type="evidence" value="ECO:0007669"/>
    <property type="project" value="UniProtKB-EC"/>
</dbReference>
<dbReference type="GO" id="GO:0008616">
    <property type="term" value="P:queuosine biosynthetic process"/>
    <property type="evidence" value="ECO:0007669"/>
    <property type="project" value="UniProtKB-UniRule"/>
</dbReference>
<dbReference type="GO" id="GO:0002099">
    <property type="term" value="P:tRNA wobble guanine modification"/>
    <property type="evidence" value="ECO:0007669"/>
    <property type="project" value="TreeGrafter"/>
</dbReference>
<dbReference type="FunFam" id="2.40.10.240:FF:000002">
    <property type="entry name" value="S-adenosylmethionine:tRNA ribosyltransferase-isomerase"/>
    <property type="match status" value="1"/>
</dbReference>
<dbReference type="FunFam" id="3.40.1780.10:FF:000001">
    <property type="entry name" value="S-adenosylmethionine:tRNA ribosyltransferase-isomerase"/>
    <property type="match status" value="1"/>
</dbReference>
<dbReference type="Gene3D" id="2.40.10.240">
    <property type="entry name" value="QueA-like"/>
    <property type="match status" value="1"/>
</dbReference>
<dbReference type="Gene3D" id="3.40.1780.10">
    <property type="entry name" value="QueA-like"/>
    <property type="match status" value="1"/>
</dbReference>
<dbReference type="HAMAP" id="MF_00113">
    <property type="entry name" value="QueA"/>
    <property type="match status" value="1"/>
</dbReference>
<dbReference type="InterPro" id="IPR003699">
    <property type="entry name" value="QueA"/>
</dbReference>
<dbReference type="InterPro" id="IPR042118">
    <property type="entry name" value="QueA_dom1"/>
</dbReference>
<dbReference type="InterPro" id="IPR042119">
    <property type="entry name" value="QueA_dom2"/>
</dbReference>
<dbReference type="InterPro" id="IPR036100">
    <property type="entry name" value="QueA_sf"/>
</dbReference>
<dbReference type="NCBIfam" id="NF001140">
    <property type="entry name" value="PRK00147.1"/>
    <property type="match status" value="1"/>
</dbReference>
<dbReference type="NCBIfam" id="TIGR00113">
    <property type="entry name" value="queA"/>
    <property type="match status" value="1"/>
</dbReference>
<dbReference type="PANTHER" id="PTHR30307">
    <property type="entry name" value="S-ADENOSYLMETHIONINE:TRNA RIBOSYLTRANSFERASE-ISOMERASE"/>
    <property type="match status" value="1"/>
</dbReference>
<dbReference type="PANTHER" id="PTHR30307:SF0">
    <property type="entry name" value="S-ADENOSYLMETHIONINE:TRNA RIBOSYLTRANSFERASE-ISOMERASE"/>
    <property type="match status" value="1"/>
</dbReference>
<dbReference type="Pfam" id="PF02547">
    <property type="entry name" value="Queuosine_synth"/>
    <property type="match status" value="1"/>
</dbReference>
<dbReference type="SUPFAM" id="SSF111337">
    <property type="entry name" value="QueA-like"/>
    <property type="match status" value="1"/>
</dbReference>
<keyword id="KW-0963">Cytoplasm</keyword>
<keyword id="KW-0671">Queuosine biosynthesis</keyword>
<keyword id="KW-0949">S-adenosyl-L-methionine</keyword>
<keyword id="KW-0808">Transferase</keyword>